<proteinExistence type="inferred from homology"/>
<name>RTC1_YEAS2</name>
<comment type="function">
    <text evidence="1">May be involved in a process influencing telomere capping.</text>
</comment>
<comment type="subcellular location">
    <subcellularLocation>
        <location evidence="1">Vacuole</location>
    </subcellularLocation>
</comment>
<comment type="similarity">
    <text evidence="5">Belongs to the WD repeat RTC1 family.</text>
</comment>
<accession>C7GV13</accession>
<organism>
    <name type="scientific">Saccharomyces cerevisiae (strain JAY291)</name>
    <name type="common">Baker's yeast</name>
    <dbReference type="NCBI Taxonomy" id="574961"/>
    <lineage>
        <taxon>Eukaryota</taxon>
        <taxon>Fungi</taxon>
        <taxon>Dikarya</taxon>
        <taxon>Ascomycota</taxon>
        <taxon>Saccharomycotina</taxon>
        <taxon>Saccharomycetes</taxon>
        <taxon>Saccharomycetales</taxon>
        <taxon>Saccharomycetaceae</taxon>
        <taxon>Saccharomyces</taxon>
    </lineage>
</organism>
<reference key="1">
    <citation type="journal article" date="2009" name="Genome Res.">
        <title>Genome structure of a Saccharomyces cerevisiae strain widely used in bioethanol production.</title>
        <authorList>
            <person name="Argueso J.L."/>
            <person name="Carazzolle M.F."/>
            <person name="Mieczkowski P.A."/>
            <person name="Duarte F.M."/>
            <person name="Netto O.V.C."/>
            <person name="Missawa S.K."/>
            <person name="Galzerani F."/>
            <person name="Costa G.G.L."/>
            <person name="Vidal R.O."/>
            <person name="Noronha M.F."/>
            <person name="Dominska M."/>
            <person name="Andrietta M.G.S."/>
            <person name="Andrietta S.R."/>
            <person name="Cunha A.F."/>
            <person name="Gomes L.H."/>
            <person name="Tavares F.C.A."/>
            <person name="Alcarde A.R."/>
            <person name="Dietrich F.S."/>
            <person name="McCusker J.H."/>
            <person name="Petes T.D."/>
            <person name="Pereira G.A.G."/>
        </authorList>
    </citation>
    <scope>NUCLEOTIDE SEQUENCE [LARGE SCALE GENOMIC DNA]</scope>
    <source>
        <strain>JAY291</strain>
    </source>
</reference>
<keyword id="KW-0479">Metal-binding</keyword>
<keyword id="KW-0597">Phosphoprotein</keyword>
<keyword id="KW-0677">Repeat</keyword>
<keyword id="KW-0926">Vacuole</keyword>
<keyword id="KW-0853">WD repeat</keyword>
<keyword id="KW-0862">Zinc</keyword>
<keyword id="KW-0863">Zinc-finger</keyword>
<gene>
    <name type="primary">RTC1</name>
    <name type="ORF">C1Q_04279</name>
</gene>
<sequence>MSLSPHVENASIPKGSTPIPKNRNVSSIGKGEFLGSSSSNNSSFRMNHYSNSGQPSVLDSIRRPNLTPTFSYSNGVYMPESHRTSSFNDSYLPYDKNPYAKTTGSMSNKSNMKIKTKKNAINTNTRKSSGLIYTTKVDKELSSIDKVNDPNINGLVCAGKTHLGLYKFSPSDRSIKCVHDFITPNSNTSTRGTTSLLPKLSKRTRQNKFSTIADVKTGFNNYKNCIAVCNNSTAISIYDLNKSSSIDNPLITSLCEHTRSINSFDFNMVESNLIISGGQDSCVKIWDLRSNKSKSSNRSDISINTASDSIRDVKWMPGYNFASKNDQGSSTYGNLKSGYKFASIHDSGYLLKFDLRQPAQYEKKLNAHTGPGLCLNWHPNQEYIATGGRDGKCCLWFVGDNANAAENTVLNYGNSPSLHAPNTSLNNSGSLAFPKLTINTGYPVTKLKFKPAYSSNIYNSLLGISSMGDEAEVRIYSLARKYIPKHVLLSETPSLGLVWWDENLIFNIDKGTRINGWDINKEPTVLENLSKNTTTWRDLDGNGLLSVDQEIGSYEVVEPELQPTSSTTCKKHPGTIKNPKNGNPENQGIIGGIKKGFSHTGLTSFTPERPPTLKAGPTFSSKSLTLASGASSFNSSSASLTSLTPQTENREEIAIEPPCIITLDIPQIFNNIRLTKIAHSRKKNVISESSSMKNSPVEKFKYLARQLKFSYIREHNVSDSADTAYKNDIENIDVVKNATETHGDNTTTTNNNDDGDDDDDDDDDDDKIIESHLLKKYNFPENNTWATLMNEKVNNKKSKRNSSSSREFDEKDVRSSISSISASRQSHDRSRKIDKNVEAELQEKIQTLVDLISIATHNASVYLSIDDLTNFKIWILIRDSLLWDLKWMTSSQISSDNASNMDANESSDFEAGENLKTGKEFPEEDGAGTSGAESLVEERPQAFRANSDEPSDAEKKPVSKLKEQLKNTEIIPYAQPNEDSDEVLTKLKELQNQRLESRTKMGETVSDDVIIEEDEHEHQEEEQPHDSPTKSAQFHASPIAKSIPILQKREHRKSFIDTFMLHSPNGYNGDTDIGNEDDNISPRFTYNSVSPRSKVSSLQSYATTTSQLETFKKLSSHTAPIIGSPRHAPSRPDSIGREQLSSSLTKKLAKCKKIIADPPWDTKKLIKQLYNQATETGNVVLTVNILFLFQTIYQITEIDIAKDAIAHFLLLLHRYELFGIAADVLKYCPFEDIMGSEGDQSSIRLFCERCGELITNESSKEKLRAEAQQTGNKKIMDKFGYWYCDSCKKKNTSCVLCERPLKKLTMVILPCGHEGHFQCIQEWFLDENEQECPGGCPGVAFI</sequence>
<dbReference type="EMBL" id="ACFL01000329">
    <property type="protein sequence ID" value="EEU05348.1"/>
    <property type="molecule type" value="Genomic_DNA"/>
</dbReference>
<dbReference type="SMR" id="C7GV13"/>
<dbReference type="IntAct" id="C7GV13">
    <property type="interactions" value="1"/>
</dbReference>
<dbReference type="OrthoDB" id="37178at4893"/>
<dbReference type="Proteomes" id="UP000008073">
    <property type="component" value="Unassembled WGS sequence"/>
</dbReference>
<dbReference type="GO" id="GO:0005829">
    <property type="term" value="C:cytosol"/>
    <property type="evidence" value="ECO:0007669"/>
    <property type="project" value="TreeGrafter"/>
</dbReference>
<dbReference type="GO" id="GO:0061700">
    <property type="term" value="C:GATOR2 complex"/>
    <property type="evidence" value="ECO:0007669"/>
    <property type="project" value="TreeGrafter"/>
</dbReference>
<dbReference type="GO" id="GO:0005774">
    <property type="term" value="C:vacuolar membrane"/>
    <property type="evidence" value="ECO:0007669"/>
    <property type="project" value="TreeGrafter"/>
</dbReference>
<dbReference type="GO" id="GO:0008270">
    <property type="term" value="F:zinc ion binding"/>
    <property type="evidence" value="ECO:0007669"/>
    <property type="project" value="UniProtKB-KW"/>
</dbReference>
<dbReference type="GO" id="GO:0016239">
    <property type="term" value="P:positive regulation of macroautophagy"/>
    <property type="evidence" value="ECO:0007669"/>
    <property type="project" value="TreeGrafter"/>
</dbReference>
<dbReference type="GO" id="GO:1904263">
    <property type="term" value="P:positive regulation of TORC1 signaling"/>
    <property type="evidence" value="ECO:0007669"/>
    <property type="project" value="TreeGrafter"/>
</dbReference>
<dbReference type="CDD" id="cd16488">
    <property type="entry name" value="mRING-H2-C3H3C2_Mio-like"/>
    <property type="match status" value="1"/>
</dbReference>
<dbReference type="FunFam" id="2.130.10.10:FF:001334">
    <property type="entry name" value="Restriction of telomere capping protein 1"/>
    <property type="match status" value="1"/>
</dbReference>
<dbReference type="Gene3D" id="2.130.10.10">
    <property type="entry name" value="YVTN repeat-like/Quinoprotein amine dehydrogenase"/>
    <property type="match status" value="1"/>
</dbReference>
<dbReference type="Gene3D" id="3.30.40.10">
    <property type="entry name" value="Zinc/RING finger domain, C3HC4 (zinc finger)"/>
    <property type="match status" value="1"/>
</dbReference>
<dbReference type="InterPro" id="IPR015943">
    <property type="entry name" value="WD40/YVTN_repeat-like_dom_sf"/>
</dbReference>
<dbReference type="InterPro" id="IPR019775">
    <property type="entry name" value="WD40_repeat_CS"/>
</dbReference>
<dbReference type="InterPro" id="IPR036322">
    <property type="entry name" value="WD40_repeat_dom_sf"/>
</dbReference>
<dbReference type="InterPro" id="IPR001680">
    <property type="entry name" value="WD40_rpt"/>
</dbReference>
<dbReference type="InterPro" id="IPR037590">
    <property type="entry name" value="WDR24"/>
</dbReference>
<dbReference type="InterPro" id="IPR049566">
    <property type="entry name" value="WDR59_RTC1-like_RING_Znf"/>
</dbReference>
<dbReference type="InterPro" id="IPR001841">
    <property type="entry name" value="Znf_RING"/>
</dbReference>
<dbReference type="InterPro" id="IPR013083">
    <property type="entry name" value="Znf_RING/FYVE/PHD"/>
</dbReference>
<dbReference type="PANTHER" id="PTHR46200">
    <property type="entry name" value="GATOR COMPLEX PROTEIN WDR24"/>
    <property type="match status" value="1"/>
</dbReference>
<dbReference type="PANTHER" id="PTHR46200:SF1">
    <property type="entry name" value="GATOR COMPLEX PROTEIN WDR24"/>
    <property type="match status" value="1"/>
</dbReference>
<dbReference type="Pfam" id="PF00400">
    <property type="entry name" value="WD40"/>
    <property type="match status" value="2"/>
</dbReference>
<dbReference type="Pfam" id="PF17120">
    <property type="entry name" value="zf-RING_16"/>
    <property type="match status" value="1"/>
</dbReference>
<dbReference type="SMART" id="SM00320">
    <property type="entry name" value="WD40"/>
    <property type="match status" value="2"/>
</dbReference>
<dbReference type="SUPFAM" id="SSF57850">
    <property type="entry name" value="RING/U-box"/>
    <property type="match status" value="1"/>
</dbReference>
<dbReference type="SUPFAM" id="SSF50978">
    <property type="entry name" value="WD40 repeat-like"/>
    <property type="match status" value="1"/>
</dbReference>
<dbReference type="PROSITE" id="PS00678">
    <property type="entry name" value="WD_REPEATS_1"/>
    <property type="match status" value="1"/>
</dbReference>
<dbReference type="PROSITE" id="PS50082">
    <property type="entry name" value="WD_REPEATS_2"/>
    <property type="match status" value="2"/>
</dbReference>
<dbReference type="PROSITE" id="PS50294">
    <property type="entry name" value="WD_REPEATS_REGION"/>
    <property type="match status" value="2"/>
</dbReference>
<dbReference type="PROSITE" id="PS50089">
    <property type="entry name" value="ZF_RING_2"/>
    <property type="match status" value="1"/>
</dbReference>
<feature type="chain" id="PRO_0000408790" description="Restriction of telomere capping protein 1">
    <location>
        <begin position="1"/>
        <end position="1342"/>
    </location>
</feature>
<feature type="repeat" description="WD 1">
    <location>
        <begin position="207"/>
        <end position="248"/>
    </location>
</feature>
<feature type="repeat" description="WD 2">
    <location>
        <begin position="256"/>
        <end position="296"/>
    </location>
</feature>
<feature type="repeat" description="WD 3">
    <location>
        <begin position="305"/>
        <end position="342"/>
    </location>
</feature>
<feature type="repeat" description="WD 4">
    <location>
        <begin position="367"/>
        <end position="406"/>
    </location>
</feature>
<feature type="repeat" description="WD 5">
    <location>
        <begin position="439"/>
        <end position="486"/>
    </location>
</feature>
<feature type="repeat" description="WD 6">
    <location>
        <begin position="489"/>
        <end position="527"/>
    </location>
</feature>
<feature type="repeat" description="WD 7">
    <location>
        <begin position="844"/>
        <end position="884"/>
    </location>
</feature>
<feature type="repeat" description="WD 8">
    <location>
        <begin position="1130"/>
        <end position="1170"/>
    </location>
</feature>
<feature type="repeat" description="WD 9">
    <location>
        <begin position="1217"/>
        <end position="1256"/>
    </location>
</feature>
<feature type="zinc finger region" description="RING-type; degenerate" evidence="3">
    <location>
        <begin position="1294"/>
        <end position="1336"/>
    </location>
</feature>
<feature type="region of interest" description="Disordered" evidence="4">
    <location>
        <begin position="1"/>
        <end position="39"/>
    </location>
</feature>
<feature type="region of interest" description="Disordered" evidence="4">
    <location>
        <begin position="559"/>
        <end position="593"/>
    </location>
</feature>
<feature type="region of interest" description="Disordered" evidence="4">
    <location>
        <begin position="600"/>
        <end position="619"/>
    </location>
</feature>
<feature type="region of interest" description="Disordered" evidence="4">
    <location>
        <begin position="630"/>
        <end position="651"/>
    </location>
</feature>
<feature type="region of interest" description="Disordered" evidence="4">
    <location>
        <begin position="736"/>
        <end position="766"/>
    </location>
</feature>
<feature type="region of interest" description="Disordered" evidence="4">
    <location>
        <begin position="788"/>
        <end position="831"/>
    </location>
</feature>
<feature type="region of interest" description="Disordered" evidence="4">
    <location>
        <begin position="942"/>
        <end position="963"/>
    </location>
</feature>
<feature type="region of interest" description="Disordered" evidence="4">
    <location>
        <begin position="1014"/>
        <end position="1047"/>
    </location>
</feature>
<feature type="compositionally biased region" description="Low complexity" evidence="4">
    <location>
        <begin position="630"/>
        <end position="644"/>
    </location>
</feature>
<feature type="compositionally biased region" description="Acidic residues" evidence="4">
    <location>
        <begin position="753"/>
        <end position="766"/>
    </location>
</feature>
<feature type="compositionally biased region" description="Low complexity" evidence="4">
    <location>
        <begin position="815"/>
        <end position="824"/>
    </location>
</feature>
<feature type="compositionally biased region" description="Basic and acidic residues" evidence="4">
    <location>
        <begin position="952"/>
        <end position="963"/>
    </location>
</feature>
<feature type="compositionally biased region" description="Basic and acidic residues" evidence="4">
    <location>
        <begin position="1016"/>
        <end position="1028"/>
    </location>
</feature>
<feature type="modified residue" description="Phosphoserine" evidence="2">
    <location>
        <position position="1037"/>
    </location>
</feature>
<feature type="modified residue" description="Phosphoserine" evidence="2">
    <location>
        <position position="1081"/>
    </location>
</feature>
<feature type="modified residue" description="Phosphoserine" evidence="2">
    <location>
        <position position="1088"/>
    </location>
</feature>
<feature type="modified residue" description="Phosphoserine" evidence="2">
    <location>
        <position position="1090"/>
    </location>
</feature>
<feature type="modified residue" description="Phosphoserine" evidence="2">
    <location>
        <position position="1124"/>
    </location>
</feature>
<feature type="modified residue" description="Phosphoserine" evidence="2">
    <location>
        <position position="1134"/>
    </location>
</feature>
<protein>
    <recommendedName>
        <fullName>Restriction of telomere capping protein 1</fullName>
    </recommendedName>
</protein>
<evidence type="ECO:0000250" key="1"/>
<evidence type="ECO:0000250" key="2">
    <source>
        <dbReference type="UniProtKB" id="Q08281"/>
    </source>
</evidence>
<evidence type="ECO:0000255" key="3">
    <source>
        <dbReference type="PROSITE-ProRule" id="PRU00175"/>
    </source>
</evidence>
<evidence type="ECO:0000256" key="4">
    <source>
        <dbReference type="SAM" id="MobiDB-lite"/>
    </source>
</evidence>
<evidence type="ECO:0000305" key="5"/>